<feature type="chain" id="PRO_1000022532" description="Chorismate synthase">
    <location>
        <begin position="1"/>
        <end position="363"/>
    </location>
</feature>
<feature type="binding site" evidence="1">
    <location>
        <position position="48"/>
    </location>
    <ligand>
        <name>NADP(+)</name>
        <dbReference type="ChEBI" id="CHEBI:58349"/>
    </ligand>
</feature>
<feature type="binding site" evidence="1">
    <location>
        <position position="54"/>
    </location>
    <ligand>
        <name>NADP(+)</name>
        <dbReference type="ChEBI" id="CHEBI:58349"/>
    </ligand>
</feature>
<feature type="binding site" evidence="1">
    <location>
        <begin position="125"/>
        <end position="127"/>
    </location>
    <ligand>
        <name>FMN</name>
        <dbReference type="ChEBI" id="CHEBI:58210"/>
    </ligand>
</feature>
<feature type="binding site" evidence="1">
    <location>
        <begin position="237"/>
        <end position="238"/>
    </location>
    <ligand>
        <name>FMN</name>
        <dbReference type="ChEBI" id="CHEBI:58210"/>
    </ligand>
</feature>
<feature type="binding site" evidence="1">
    <location>
        <position position="277"/>
    </location>
    <ligand>
        <name>FMN</name>
        <dbReference type="ChEBI" id="CHEBI:58210"/>
    </ligand>
</feature>
<feature type="binding site" evidence="1">
    <location>
        <begin position="292"/>
        <end position="296"/>
    </location>
    <ligand>
        <name>FMN</name>
        <dbReference type="ChEBI" id="CHEBI:58210"/>
    </ligand>
</feature>
<feature type="binding site" evidence="1">
    <location>
        <position position="318"/>
    </location>
    <ligand>
        <name>FMN</name>
        <dbReference type="ChEBI" id="CHEBI:58210"/>
    </ligand>
</feature>
<organism>
    <name type="scientific">Stutzerimonas stutzeri (strain A1501)</name>
    <name type="common">Pseudomonas stutzeri</name>
    <dbReference type="NCBI Taxonomy" id="379731"/>
    <lineage>
        <taxon>Bacteria</taxon>
        <taxon>Pseudomonadati</taxon>
        <taxon>Pseudomonadota</taxon>
        <taxon>Gammaproteobacteria</taxon>
        <taxon>Pseudomonadales</taxon>
        <taxon>Pseudomonadaceae</taxon>
        <taxon>Stutzerimonas</taxon>
    </lineage>
</organism>
<sequence length="363" mass="38967">MSGNTYGKLFTVTTAGESHGPALVAIVDGCPPGLELSLDDLQRDLDRRKPGTSRHTTQRQEADEVEILSGVFEGRTTGCPIGLLIRNTDQKSKDYSAIKDLFRPAHADYTYHHKYGLRDYRGGGRSSARETAMRVAAGAIAKKYLATLGIQVRGYMSQLGPIEIPFKTWDSVEQNAFFSPDPDNVPELEAYMDQLRRDQDSVGAKITVVAEGVPPGLGEPIFDRLDAELAHALMSINAVKGVEIGAGFASVAQRGTEHRDELTPQGFLSNNAGGILGGISSGQPIVAHLALKPTSSITTPGRSIDVNGEAVDVITKGRHDPCVGIRATPIAEAMMAIVLLDHLLRHRAQNADVQVTTPVLGQL</sequence>
<evidence type="ECO:0000255" key="1">
    <source>
        <dbReference type="HAMAP-Rule" id="MF_00300"/>
    </source>
</evidence>
<accession>A4VM84</accession>
<gene>
    <name evidence="1" type="primary">aroC</name>
    <name type="ordered locus">PST_2433</name>
</gene>
<proteinExistence type="inferred from homology"/>
<name>AROC_STUS1</name>
<protein>
    <recommendedName>
        <fullName evidence="1">Chorismate synthase</fullName>
        <shortName evidence="1">CS</shortName>
        <ecNumber evidence="1">4.2.3.5</ecNumber>
    </recommendedName>
    <alternativeName>
        <fullName evidence="1">5-enolpyruvylshikimate-3-phosphate phospholyase</fullName>
    </alternativeName>
</protein>
<keyword id="KW-0028">Amino-acid biosynthesis</keyword>
<keyword id="KW-0057">Aromatic amino acid biosynthesis</keyword>
<keyword id="KW-0274">FAD</keyword>
<keyword id="KW-0285">Flavoprotein</keyword>
<keyword id="KW-0288">FMN</keyword>
<keyword id="KW-0456">Lyase</keyword>
<keyword id="KW-0521">NADP</keyword>
<keyword id="KW-1185">Reference proteome</keyword>
<comment type="function">
    <text evidence="1">Catalyzes the anti-1,4-elimination of the C-3 phosphate and the C-6 proR hydrogen from 5-enolpyruvylshikimate-3-phosphate (EPSP) to yield chorismate, which is the branch point compound that serves as the starting substrate for the three terminal pathways of aromatic amino acid biosynthesis. This reaction introduces a second double bond into the aromatic ring system.</text>
</comment>
<comment type="catalytic activity">
    <reaction evidence="1">
        <text>5-O-(1-carboxyvinyl)-3-phosphoshikimate = chorismate + phosphate</text>
        <dbReference type="Rhea" id="RHEA:21020"/>
        <dbReference type="ChEBI" id="CHEBI:29748"/>
        <dbReference type="ChEBI" id="CHEBI:43474"/>
        <dbReference type="ChEBI" id="CHEBI:57701"/>
        <dbReference type="EC" id="4.2.3.5"/>
    </reaction>
</comment>
<comment type="cofactor">
    <cofactor evidence="1">
        <name>FMNH2</name>
        <dbReference type="ChEBI" id="CHEBI:57618"/>
    </cofactor>
    <text evidence="1">Reduced FMN (FMNH(2)).</text>
</comment>
<comment type="pathway">
    <text evidence="1">Metabolic intermediate biosynthesis; chorismate biosynthesis; chorismate from D-erythrose 4-phosphate and phosphoenolpyruvate: step 7/7.</text>
</comment>
<comment type="subunit">
    <text evidence="1">Homotetramer.</text>
</comment>
<comment type="similarity">
    <text evidence="1">Belongs to the chorismate synthase family.</text>
</comment>
<reference key="1">
    <citation type="journal article" date="2008" name="Proc. Natl. Acad. Sci. U.S.A.">
        <title>Nitrogen fixation island and rhizosphere competence traits in the genome of root-associated Pseudomonas stutzeri A1501.</title>
        <authorList>
            <person name="Yan Y."/>
            <person name="Yang J."/>
            <person name="Dou Y."/>
            <person name="Chen M."/>
            <person name="Ping S."/>
            <person name="Peng J."/>
            <person name="Lu W."/>
            <person name="Zhang W."/>
            <person name="Yao Z."/>
            <person name="Li H."/>
            <person name="Liu W."/>
            <person name="He S."/>
            <person name="Geng L."/>
            <person name="Zhang X."/>
            <person name="Yang F."/>
            <person name="Yu H."/>
            <person name="Zhan Y."/>
            <person name="Li D."/>
            <person name="Lin Z."/>
            <person name="Wang Y."/>
            <person name="Elmerich C."/>
            <person name="Lin M."/>
            <person name="Jin Q."/>
        </authorList>
    </citation>
    <scope>NUCLEOTIDE SEQUENCE [LARGE SCALE GENOMIC DNA]</scope>
    <source>
        <strain>A1501</strain>
    </source>
</reference>
<dbReference type="EC" id="4.2.3.5" evidence="1"/>
<dbReference type="EMBL" id="CP000304">
    <property type="protein sequence ID" value="ABP80085.1"/>
    <property type="molecule type" value="Genomic_DNA"/>
</dbReference>
<dbReference type="RefSeq" id="WP_011913548.1">
    <property type="nucleotide sequence ID" value="NC_009434.1"/>
</dbReference>
<dbReference type="SMR" id="A4VM84"/>
<dbReference type="KEGG" id="psa:PST_2433"/>
<dbReference type="eggNOG" id="COG0082">
    <property type="taxonomic scope" value="Bacteria"/>
</dbReference>
<dbReference type="HOGENOM" id="CLU_034547_0_2_6"/>
<dbReference type="UniPathway" id="UPA00053">
    <property type="reaction ID" value="UER00090"/>
</dbReference>
<dbReference type="Proteomes" id="UP000000233">
    <property type="component" value="Chromosome"/>
</dbReference>
<dbReference type="GO" id="GO:0005829">
    <property type="term" value="C:cytosol"/>
    <property type="evidence" value="ECO:0007669"/>
    <property type="project" value="TreeGrafter"/>
</dbReference>
<dbReference type="GO" id="GO:0004107">
    <property type="term" value="F:chorismate synthase activity"/>
    <property type="evidence" value="ECO:0007669"/>
    <property type="project" value="UniProtKB-UniRule"/>
</dbReference>
<dbReference type="GO" id="GO:0010181">
    <property type="term" value="F:FMN binding"/>
    <property type="evidence" value="ECO:0007669"/>
    <property type="project" value="TreeGrafter"/>
</dbReference>
<dbReference type="GO" id="GO:0008652">
    <property type="term" value="P:amino acid biosynthetic process"/>
    <property type="evidence" value="ECO:0007669"/>
    <property type="project" value="UniProtKB-KW"/>
</dbReference>
<dbReference type="GO" id="GO:0009073">
    <property type="term" value="P:aromatic amino acid family biosynthetic process"/>
    <property type="evidence" value="ECO:0007669"/>
    <property type="project" value="UniProtKB-KW"/>
</dbReference>
<dbReference type="GO" id="GO:0009423">
    <property type="term" value="P:chorismate biosynthetic process"/>
    <property type="evidence" value="ECO:0007669"/>
    <property type="project" value="UniProtKB-UniRule"/>
</dbReference>
<dbReference type="CDD" id="cd07304">
    <property type="entry name" value="Chorismate_synthase"/>
    <property type="match status" value="1"/>
</dbReference>
<dbReference type="FunFam" id="3.60.150.10:FF:000001">
    <property type="entry name" value="Chorismate synthase"/>
    <property type="match status" value="1"/>
</dbReference>
<dbReference type="Gene3D" id="3.60.150.10">
    <property type="entry name" value="Chorismate synthase AroC"/>
    <property type="match status" value="1"/>
</dbReference>
<dbReference type="HAMAP" id="MF_00300">
    <property type="entry name" value="Chorismate_synth"/>
    <property type="match status" value="1"/>
</dbReference>
<dbReference type="InterPro" id="IPR000453">
    <property type="entry name" value="Chorismate_synth"/>
</dbReference>
<dbReference type="InterPro" id="IPR035904">
    <property type="entry name" value="Chorismate_synth_AroC_sf"/>
</dbReference>
<dbReference type="InterPro" id="IPR020541">
    <property type="entry name" value="Chorismate_synthase_CS"/>
</dbReference>
<dbReference type="NCBIfam" id="TIGR00033">
    <property type="entry name" value="aroC"/>
    <property type="match status" value="1"/>
</dbReference>
<dbReference type="NCBIfam" id="NF003793">
    <property type="entry name" value="PRK05382.1"/>
    <property type="match status" value="1"/>
</dbReference>
<dbReference type="PANTHER" id="PTHR21085">
    <property type="entry name" value="CHORISMATE SYNTHASE"/>
    <property type="match status" value="1"/>
</dbReference>
<dbReference type="PANTHER" id="PTHR21085:SF0">
    <property type="entry name" value="CHORISMATE SYNTHASE"/>
    <property type="match status" value="1"/>
</dbReference>
<dbReference type="Pfam" id="PF01264">
    <property type="entry name" value="Chorismate_synt"/>
    <property type="match status" value="1"/>
</dbReference>
<dbReference type="PIRSF" id="PIRSF001456">
    <property type="entry name" value="Chorismate_synth"/>
    <property type="match status" value="1"/>
</dbReference>
<dbReference type="SUPFAM" id="SSF103263">
    <property type="entry name" value="Chorismate synthase, AroC"/>
    <property type="match status" value="1"/>
</dbReference>
<dbReference type="PROSITE" id="PS00787">
    <property type="entry name" value="CHORISMATE_SYNTHASE_1"/>
    <property type="match status" value="1"/>
</dbReference>
<dbReference type="PROSITE" id="PS00788">
    <property type="entry name" value="CHORISMATE_SYNTHASE_2"/>
    <property type="match status" value="1"/>
</dbReference>
<dbReference type="PROSITE" id="PS00789">
    <property type="entry name" value="CHORISMATE_SYNTHASE_3"/>
    <property type="match status" value="1"/>
</dbReference>